<accession>A9R429</accession>
<name>UBIB_YERPG</name>
<sequence>MTPGELRRLYLIIRVFLSYGLDELIPNIRLTLPLRVGRHLFFWLSNRHKDKSLGERLRLALQELGPVWIKFGQMMSTRRDLFPPNIADQLALLQDRVASFDGALARKHIEIAMGGALETWFDDFDSQALASASIAQVHTARLKENGKEVVLKVIRPDILPIIKADVRLMYRLAGWVPKLLPDGRRLRPREVVREYEKTLLDELNLLREAANAIQLRRNFEDSPMLYIPEVYSDYCRESVLVMERIYGIPVSDIAALEDQGTNMKLLAERGVQVFFTQVFRDSFFHADMHPGNIFVSYEHPHDPLYIGIDCGIVGSLNKADKRYLAENFIAFFNRDYRRVAELHVDSGWVPRDTNVEDFEFAIRTVCEPIFEKPLAEISFGHVLLNLFNTARRFNMEVQPQLVLLQKTLLYVEGLGRQLYPQLDLWTTAKPFLESWLRDQVGLPAVIRALKEKAPFWAEKFPELPELVYDSLQQHKLLQQSVEKLTIQIQGQQQRQGQSRYLFGVGATLLVSGTILFLADATEVSTGFIVAGALAWFIGWRRTC</sequence>
<keyword id="KW-0067">ATP-binding</keyword>
<keyword id="KW-0997">Cell inner membrane</keyword>
<keyword id="KW-1003">Cell membrane</keyword>
<keyword id="KW-0418">Kinase</keyword>
<keyword id="KW-0472">Membrane</keyword>
<keyword id="KW-0547">Nucleotide-binding</keyword>
<keyword id="KW-0808">Transferase</keyword>
<keyword id="KW-0812">Transmembrane</keyword>
<keyword id="KW-1133">Transmembrane helix</keyword>
<keyword id="KW-0831">Ubiquinone biosynthesis</keyword>
<gene>
    <name evidence="1" type="primary">ubiB</name>
    <name type="ordered locus">YpAngola_A3639</name>
</gene>
<organism>
    <name type="scientific">Yersinia pestis bv. Antiqua (strain Angola)</name>
    <dbReference type="NCBI Taxonomy" id="349746"/>
    <lineage>
        <taxon>Bacteria</taxon>
        <taxon>Pseudomonadati</taxon>
        <taxon>Pseudomonadota</taxon>
        <taxon>Gammaproteobacteria</taxon>
        <taxon>Enterobacterales</taxon>
        <taxon>Yersiniaceae</taxon>
        <taxon>Yersinia</taxon>
    </lineage>
</organism>
<proteinExistence type="inferred from homology"/>
<dbReference type="EC" id="2.7.-.-" evidence="1"/>
<dbReference type="EMBL" id="CP000901">
    <property type="protein sequence ID" value="ABX85709.1"/>
    <property type="molecule type" value="Genomic_DNA"/>
</dbReference>
<dbReference type="RefSeq" id="WP_002211535.1">
    <property type="nucleotide sequence ID" value="NZ_CP009935.1"/>
</dbReference>
<dbReference type="SMR" id="A9R429"/>
<dbReference type="GeneID" id="57974929"/>
<dbReference type="KEGG" id="ypg:YpAngola_A3639"/>
<dbReference type="PATRIC" id="fig|349746.12.peg.341"/>
<dbReference type="UniPathway" id="UPA00232"/>
<dbReference type="GO" id="GO:0005886">
    <property type="term" value="C:plasma membrane"/>
    <property type="evidence" value="ECO:0007669"/>
    <property type="project" value="UniProtKB-SubCell"/>
</dbReference>
<dbReference type="GO" id="GO:0005524">
    <property type="term" value="F:ATP binding"/>
    <property type="evidence" value="ECO:0007669"/>
    <property type="project" value="UniProtKB-KW"/>
</dbReference>
<dbReference type="GO" id="GO:0004672">
    <property type="term" value="F:protein kinase activity"/>
    <property type="evidence" value="ECO:0007669"/>
    <property type="project" value="UniProtKB-UniRule"/>
</dbReference>
<dbReference type="GO" id="GO:0010795">
    <property type="term" value="P:regulation of ubiquinone biosynthetic process"/>
    <property type="evidence" value="ECO:0007669"/>
    <property type="project" value="UniProtKB-UniRule"/>
</dbReference>
<dbReference type="GO" id="GO:0006744">
    <property type="term" value="P:ubiquinone biosynthetic process"/>
    <property type="evidence" value="ECO:0007669"/>
    <property type="project" value="UniProtKB-UniPathway"/>
</dbReference>
<dbReference type="CDD" id="cd13972">
    <property type="entry name" value="UbiB"/>
    <property type="match status" value="1"/>
</dbReference>
<dbReference type="HAMAP" id="MF_00414">
    <property type="entry name" value="UbiB"/>
    <property type="match status" value="1"/>
</dbReference>
<dbReference type="InterPro" id="IPR004147">
    <property type="entry name" value="ABC1_dom"/>
</dbReference>
<dbReference type="InterPro" id="IPR011009">
    <property type="entry name" value="Kinase-like_dom_sf"/>
</dbReference>
<dbReference type="InterPro" id="IPR010232">
    <property type="entry name" value="UbiB"/>
</dbReference>
<dbReference type="InterPro" id="IPR045308">
    <property type="entry name" value="UbiB_bact"/>
</dbReference>
<dbReference type="InterPro" id="IPR050154">
    <property type="entry name" value="UbiB_kinase"/>
</dbReference>
<dbReference type="NCBIfam" id="NF003404">
    <property type="entry name" value="PRK04750.1"/>
    <property type="match status" value="1"/>
</dbReference>
<dbReference type="NCBIfam" id="TIGR01982">
    <property type="entry name" value="UbiB"/>
    <property type="match status" value="1"/>
</dbReference>
<dbReference type="PANTHER" id="PTHR10566">
    <property type="entry name" value="CHAPERONE-ACTIVITY OF BC1 COMPLEX CABC1 -RELATED"/>
    <property type="match status" value="1"/>
</dbReference>
<dbReference type="PANTHER" id="PTHR10566:SF113">
    <property type="entry name" value="PROTEIN ACTIVITY OF BC1 COMPLEX KINASE 7, CHLOROPLASTIC"/>
    <property type="match status" value="1"/>
</dbReference>
<dbReference type="Pfam" id="PF03109">
    <property type="entry name" value="ABC1"/>
    <property type="match status" value="1"/>
</dbReference>
<dbReference type="SUPFAM" id="SSF56112">
    <property type="entry name" value="Protein kinase-like (PK-like)"/>
    <property type="match status" value="1"/>
</dbReference>
<reference key="1">
    <citation type="journal article" date="2010" name="J. Bacteriol.">
        <title>Genome sequence of the deep-rooted Yersinia pestis strain Angola reveals new insights into the evolution and pangenome of the plague bacterium.</title>
        <authorList>
            <person name="Eppinger M."/>
            <person name="Worsham P.L."/>
            <person name="Nikolich M.P."/>
            <person name="Riley D.R."/>
            <person name="Sebastian Y."/>
            <person name="Mou S."/>
            <person name="Achtman M."/>
            <person name="Lindler L.E."/>
            <person name="Ravel J."/>
        </authorList>
    </citation>
    <scope>NUCLEOTIDE SEQUENCE [LARGE SCALE GENOMIC DNA]</scope>
    <source>
        <strain>Angola</strain>
    </source>
</reference>
<protein>
    <recommendedName>
        <fullName evidence="1">Probable protein kinase UbiB</fullName>
        <ecNumber evidence="1">2.7.-.-</ecNumber>
    </recommendedName>
    <alternativeName>
        <fullName evidence="1">Ubiquinone biosynthesis protein UbiB</fullName>
    </alternativeName>
</protein>
<evidence type="ECO:0000255" key="1">
    <source>
        <dbReference type="HAMAP-Rule" id="MF_00414"/>
    </source>
</evidence>
<comment type="function">
    <text evidence="1">Is probably a protein kinase regulator of UbiI activity which is involved in aerobic coenzyme Q (ubiquinone) biosynthesis.</text>
</comment>
<comment type="pathway">
    <text>Cofactor biosynthesis; ubiquinone biosynthesis [regulation].</text>
</comment>
<comment type="subcellular location">
    <subcellularLocation>
        <location evidence="1">Cell inner membrane</location>
        <topology evidence="1">Single-pass membrane protein</topology>
    </subcellularLocation>
</comment>
<comment type="similarity">
    <text evidence="1">Belongs to the ABC1 family. UbiB subfamily.</text>
</comment>
<feature type="chain" id="PRO_1000123936" description="Probable protein kinase UbiB">
    <location>
        <begin position="1"/>
        <end position="543"/>
    </location>
</feature>
<feature type="transmembrane region" description="Helical" evidence="1">
    <location>
        <begin position="517"/>
        <end position="539"/>
    </location>
</feature>
<feature type="domain" description="Protein kinase" evidence="1">
    <location>
        <begin position="123"/>
        <end position="501"/>
    </location>
</feature>
<feature type="active site" description="Proton acceptor" evidence="1">
    <location>
        <position position="287"/>
    </location>
</feature>
<feature type="binding site" evidence="1">
    <location>
        <begin position="129"/>
        <end position="137"/>
    </location>
    <ligand>
        <name>ATP</name>
        <dbReference type="ChEBI" id="CHEBI:30616"/>
    </ligand>
</feature>
<feature type="binding site" evidence="1">
    <location>
        <position position="152"/>
    </location>
    <ligand>
        <name>ATP</name>
        <dbReference type="ChEBI" id="CHEBI:30616"/>
    </ligand>
</feature>